<comment type="function">
    <text evidence="1 2">Catalyzes the transfer of the cytidylyl group of CTP to D-ribitol 5-phosphate.</text>
</comment>
<comment type="catalytic activity">
    <reaction evidence="1 2">
        <text>D-ribitol 5-phosphate + CTP + H(+) = CDP-L-ribitol + diphosphate</text>
        <dbReference type="Rhea" id="RHEA:12456"/>
        <dbReference type="ChEBI" id="CHEBI:15378"/>
        <dbReference type="ChEBI" id="CHEBI:33019"/>
        <dbReference type="ChEBI" id="CHEBI:37563"/>
        <dbReference type="ChEBI" id="CHEBI:57608"/>
        <dbReference type="ChEBI" id="CHEBI:57695"/>
        <dbReference type="EC" id="2.7.7.40"/>
    </reaction>
</comment>
<comment type="biophysicochemical properties">
    <kinetics>
        <KM evidence="2">38.7 uM for CTP</KM>
        <KM evidence="2">102.2 uM for D-ribitol 5-phosphate</KM>
    </kinetics>
</comment>
<comment type="pathway">
    <text evidence="1 2">Cell wall biogenesis; poly(ribitol phosphate) teichoic acid biosynthesis.</text>
</comment>
<comment type="subunit">
    <text evidence="2">Heterodimer together with TarJ.</text>
</comment>
<comment type="similarity">
    <text evidence="1 4">Belongs to the IspD/TarI cytidylyltransferase family. TarI subfamily.</text>
</comment>
<comment type="sequence caution" evidence="4">
    <conflict type="erroneous initiation">
        <sequence resource="EMBL-CDS" id="ABD29396"/>
    </conflict>
    <text>Truncated N-terminus.</text>
</comment>
<name>TARI2_STAA8</name>
<accession>Q2G2C4</accession>
<gene>
    <name evidence="3" type="primary">tarI'</name>
    <name evidence="5" type="ordered locus">SAOUHSC_00220</name>
</gene>
<dbReference type="EC" id="2.7.7.40" evidence="1 2"/>
<dbReference type="EMBL" id="CP000253">
    <property type="protein sequence ID" value="ABD29396.1"/>
    <property type="status" value="ALT_INIT"/>
    <property type="molecule type" value="Genomic_DNA"/>
</dbReference>
<dbReference type="RefSeq" id="WP_000638475.1">
    <property type="nucleotide sequence ID" value="NZ_LS483365.1"/>
</dbReference>
<dbReference type="RefSeq" id="WP_011443615.1">
    <property type="nucleotide sequence ID" value="NC_007795.1"/>
</dbReference>
<dbReference type="RefSeq" id="YP_498815.1">
    <property type="nucleotide sequence ID" value="NC_007795.1"/>
</dbReference>
<dbReference type="SMR" id="Q2G2C4"/>
<dbReference type="STRING" id="93061.SAOUHSC_00220"/>
<dbReference type="PaxDb" id="1280-SAXN108_0230"/>
<dbReference type="GeneID" id="3920296"/>
<dbReference type="KEGG" id="sao:SAOUHSC_00220"/>
<dbReference type="PATRIC" id="fig|93061.5.peg.202"/>
<dbReference type="eggNOG" id="COG1211">
    <property type="taxonomic scope" value="Bacteria"/>
</dbReference>
<dbReference type="HOGENOM" id="CLU_061281_2_3_9"/>
<dbReference type="OrthoDB" id="9806837at2"/>
<dbReference type="SABIO-RK" id="Q2G2C4"/>
<dbReference type="UniPathway" id="UPA00790"/>
<dbReference type="Proteomes" id="UP000008816">
    <property type="component" value="Chromosome"/>
</dbReference>
<dbReference type="GO" id="GO:0050518">
    <property type="term" value="F:2-C-methyl-D-erythritol 4-phosphate cytidylyltransferase activity"/>
    <property type="evidence" value="ECO:0000318"/>
    <property type="project" value="GO_Central"/>
</dbReference>
<dbReference type="GO" id="GO:0047349">
    <property type="term" value="F:D-ribitol-5-phosphate cytidylyltransferase activity"/>
    <property type="evidence" value="ECO:0007669"/>
    <property type="project" value="UniProtKB-UniRule"/>
</dbReference>
<dbReference type="GO" id="GO:0071555">
    <property type="term" value="P:cell wall organization"/>
    <property type="evidence" value="ECO:0007669"/>
    <property type="project" value="UniProtKB-KW"/>
</dbReference>
<dbReference type="GO" id="GO:0008299">
    <property type="term" value="P:isoprenoid biosynthetic process"/>
    <property type="evidence" value="ECO:0007669"/>
    <property type="project" value="InterPro"/>
</dbReference>
<dbReference type="GO" id="GO:1902012">
    <property type="term" value="P:poly(ribitol phosphate) teichoic acid biosynthetic process"/>
    <property type="evidence" value="ECO:0007669"/>
    <property type="project" value="UniProtKB-UniRule"/>
</dbReference>
<dbReference type="CDD" id="cd02516">
    <property type="entry name" value="CDP-ME_synthetase"/>
    <property type="match status" value="1"/>
</dbReference>
<dbReference type="FunFam" id="3.90.550.10:FF:000003">
    <property type="entry name" value="2-C-methyl-D-erythritol 4-phosphate cytidylyltransferase"/>
    <property type="match status" value="1"/>
</dbReference>
<dbReference type="Gene3D" id="3.90.550.10">
    <property type="entry name" value="Spore Coat Polysaccharide Biosynthesis Protein SpsA, Chain A"/>
    <property type="match status" value="1"/>
</dbReference>
<dbReference type="HAMAP" id="MF_02068">
    <property type="entry name" value="TarI"/>
    <property type="match status" value="1"/>
</dbReference>
<dbReference type="InterPro" id="IPR034683">
    <property type="entry name" value="IspD/TarI"/>
</dbReference>
<dbReference type="InterPro" id="IPR050088">
    <property type="entry name" value="IspD/TarI_cytidylyltransf_bact"/>
</dbReference>
<dbReference type="InterPro" id="IPR018294">
    <property type="entry name" value="ISPD_synthase_CS"/>
</dbReference>
<dbReference type="InterPro" id="IPR029044">
    <property type="entry name" value="Nucleotide-diphossugar_trans"/>
</dbReference>
<dbReference type="InterPro" id="IPR034709">
    <property type="entry name" value="TarI"/>
</dbReference>
<dbReference type="NCBIfam" id="NF001183">
    <property type="entry name" value="PRK00155.1-3"/>
    <property type="match status" value="1"/>
</dbReference>
<dbReference type="NCBIfam" id="NF009924">
    <property type="entry name" value="PRK13385.1"/>
    <property type="match status" value="1"/>
</dbReference>
<dbReference type="PANTHER" id="PTHR32125">
    <property type="entry name" value="2-C-METHYL-D-ERYTHRITOL 4-PHOSPHATE CYTIDYLYLTRANSFERASE, CHLOROPLASTIC"/>
    <property type="match status" value="1"/>
</dbReference>
<dbReference type="PANTHER" id="PTHR32125:SF8">
    <property type="entry name" value="RIBITOL-5-PHOSPHATE CYTIDYLYLTRANSFERASE"/>
    <property type="match status" value="1"/>
</dbReference>
<dbReference type="Pfam" id="PF01128">
    <property type="entry name" value="IspD"/>
    <property type="match status" value="1"/>
</dbReference>
<dbReference type="SUPFAM" id="SSF53448">
    <property type="entry name" value="Nucleotide-diphospho-sugar transferases"/>
    <property type="match status" value="1"/>
</dbReference>
<dbReference type="PROSITE" id="PS01295">
    <property type="entry name" value="ISPD"/>
    <property type="match status" value="1"/>
</dbReference>
<evidence type="ECO:0000255" key="1">
    <source>
        <dbReference type="HAMAP-Rule" id="MF_02068"/>
    </source>
</evidence>
<evidence type="ECO:0000269" key="2">
    <source>
    </source>
</evidence>
<evidence type="ECO:0000303" key="3">
    <source>
    </source>
</evidence>
<evidence type="ECO:0000305" key="4"/>
<evidence type="ECO:0000312" key="5">
    <source>
        <dbReference type="EMBL" id="ABD29396.1"/>
    </source>
</evidence>
<reference key="1">
    <citation type="book" date="2006" name="Gram positive pathogens, 2nd edition">
        <title>The Staphylococcus aureus NCTC 8325 genome.</title>
        <editorList>
            <person name="Fischetti V."/>
            <person name="Novick R."/>
            <person name="Ferretti J."/>
            <person name="Portnoy D."/>
            <person name="Rood J."/>
        </editorList>
        <authorList>
            <person name="Gillaspy A.F."/>
            <person name="Worrell V."/>
            <person name="Orvis J."/>
            <person name="Roe B.A."/>
            <person name="Dyer D.W."/>
            <person name="Iandolo J.J."/>
        </authorList>
    </citation>
    <scope>NUCLEOTIDE SEQUENCE [LARGE SCALE GENOMIC DNA]</scope>
    <source>
        <strain>NCTC 8325 / PS 47</strain>
    </source>
</reference>
<reference key="2">
    <citation type="journal article" date="2008" name="J. Bacteriol.">
        <title>Duplication of teichoic acid biosynthetic genes in Staphylococcus aureus leads to functionally redundant poly(ribitol phosphate) polymerases.</title>
        <authorList>
            <person name="Pereira M.P."/>
            <person name="D'Elia M.A."/>
            <person name="Troczynska J."/>
            <person name="Brown E.D."/>
        </authorList>
    </citation>
    <scope>FUNCTION</scope>
    <scope>CATALYTIC ACTIVITY</scope>
    <scope>BIOPHYSICOCHEMICAL PROPERTIES</scope>
    <scope>PATHWAY</scope>
    <scope>SUBUNIT</scope>
    <source>
        <strain>RN4220</strain>
    </source>
</reference>
<keyword id="KW-0961">Cell wall biogenesis/degradation</keyword>
<keyword id="KW-0548">Nucleotidyltransferase</keyword>
<keyword id="KW-1185">Reference proteome</keyword>
<keyword id="KW-0777">Teichoic acid biosynthesis</keyword>
<keyword id="KW-0808">Transferase</keyword>
<proteinExistence type="evidence at protein level"/>
<organism>
    <name type="scientific">Staphylococcus aureus (strain NCTC 8325 / PS 47)</name>
    <dbReference type="NCBI Taxonomy" id="93061"/>
    <lineage>
        <taxon>Bacteria</taxon>
        <taxon>Bacillati</taxon>
        <taxon>Bacillota</taxon>
        <taxon>Bacilli</taxon>
        <taxon>Bacillales</taxon>
        <taxon>Staphylococcaceae</taxon>
        <taxon>Staphylococcus</taxon>
    </lineage>
</organism>
<protein>
    <recommendedName>
        <fullName evidence="1 4">Ribitol-5-phosphate cytidylyltransferase 2</fullName>
        <ecNumber evidence="1 2">2.7.7.40</ecNumber>
    </recommendedName>
</protein>
<feature type="chain" id="PRO_0000437479" description="Ribitol-5-phosphate cytidylyltransferase 2">
    <location>
        <begin position="1"/>
        <end position="238"/>
    </location>
</feature>
<feature type="binding site" evidence="1">
    <location>
        <begin position="7"/>
        <end position="10"/>
    </location>
    <ligand>
        <name>CTP</name>
        <dbReference type="ChEBI" id="CHEBI:37563"/>
    </ligand>
</feature>
<feature type="binding site" evidence="1">
    <location>
        <begin position="81"/>
        <end position="87"/>
    </location>
    <ligand>
        <name>CTP</name>
        <dbReference type="ChEBI" id="CHEBI:37563"/>
    </ligand>
</feature>
<feature type="site" description="Transition state stabilizer" evidence="1">
    <location>
        <position position="14"/>
    </location>
</feature>
<feature type="site" description="Transition state stabilizer" evidence="1">
    <location>
        <position position="22"/>
    </location>
</feature>
<feature type="site" description="Positions ribitol 5-phosphate for the nucleophilic attack" evidence="1">
    <location>
        <position position="160"/>
    </location>
</feature>
<feature type="site" description="Positions ribitol 5-phosphate for the nucleophilic attack" evidence="1">
    <location>
        <position position="217"/>
    </location>
</feature>
<sequence length="238" mass="26575">MIYAGILAGGIGSRMGNVPLPKQFLDIDNKPILIHTIEKFILVSEFNEIIIATPAQWISHTQDILKKYNITDQRVKVVAGGTDRNETIMNIIDHIRNVNGINNDDVIVTHDAVRPFLTQRIIKENIEVAAKYGAVDTVIEAIDTIVMSKDKQNIHSIPVRNEMYQGQTPQSFNIKLLQDSYRALSSEQKEILSDACKIIVESGHAVKLVRGELYNIKVTTPYDLKVANAIIQGDIADD</sequence>